<name>PSBT_MASLA</name>
<comment type="function">
    <text evidence="1">Found at the monomer-monomer interface of the photosystem II (PS II) dimer, plays a role in assembly and dimerization of PSII. PSII is a light-driven water plastoquinone oxidoreductase, using light energy to abstract electrons from H(2)O, generating a proton gradient subsequently used for ATP formation.</text>
</comment>
<comment type="subunit">
    <text evidence="1">PSII is composed of 1 copy each of membrane proteins PsbA, PsbB, PsbC, PsbD, PsbE, PsbF, PsbH, PsbI, PsbJ, PsbK, PsbL, PsbM, PsbT, PsbX, PsbY, PsbZ, Psb30/Ycf12, peripheral proteins PsbO, CyanoQ (PsbQ), PsbU, PsbV and a large number of cofactors. It forms dimeric complexes.</text>
</comment>
<comment type="subcellular location">
    <subcellularLocation>
        <location evidence="1">Cellular thylakoid membrane</location>
        <topology evidence="1">Single-pass membrane protein</topology>
    </subcellularLocation>
</comment>
<comment type="similarity">
    <text evidence="1">Belongs to the PsbT family.</text>
</comment>
<proteinExistence type="inferred from homology"/>
<evidence type="ECO:0000255" key="1">
    <source>
        <dbReference type="HAMAP-Rule" id="MF_00808"/>
    </source>
</evidence>
<dbReference type="EMBL" id="AF170925">
    <property type="protein sequence ID" value="AAD51004.1"/>
    <property type="molecule type" value="Genomic_DNA"/>
</dbReference>
<dbReference type="SMR" id="Q9S3W3"/>
<dbReference type="GO" id="GO:0009539">
    <property type="term" value="C:photosystem II reaction center"/>
    <property type="evidence" value="ECO:0007669"/>
    <property type="project" value="InterPro"/>
</dbReference>
<dbReference type="GO" id="GO:0031676">
    <property type="term" value="C:plasma membrane-derived thylakoid membrane"/>
    <property type="evidence" value="ECO:0007669"/>
    <property type="project" value="UniProtKB-SubCell"/>
</dbReference>
<dbReference type="GO" id="GO:0015979">
    <property type="term" value="P:photosynthesis"/>
    <property type="evidence" value="ECO:0007669"/>
    <property type="project" value="UniProtKB-UniRule"/>
</dbReference>
<dbReference type="HAMAP" id="MF_00808">
    <property type="entry name" value="PSII_PsbT"/>
    <property type="match status" value="1"/>
</dbReference>
<dbReference type="InterPro" id="IPR001743">
    <property type="entry name" value="PSII_PsbT"/>
</dbReference>
<dbReference type="InterPro" id="IPR037268">
    <property type="entry name" value="PSII_PsbT_sf"/>
</dbReference>
<dbReference type="NCBIfam" id="NF008825">
    <property type="entry name" value="PRK11875.1"/>
    <property type="match status" value="1"/>
</dbReference>
<dbReference type="PANTHER" id="PTHR36411">
    <property type="match status" value="1"/>
</dbReference>
<dbReference type="PANTHER" id="PTHR36411:SF2">
    <property type="entry name" value="PHOTOSYSTEM II REACTION CENTER PROTEIN T"/>
    <property type="match status" value="1"/>
</dbReference>
<dbReference type="Pfam" id="PF01405">
    <property type="entry name" value="PsbT"/>
    <property type="match status" value="1"/>
</dbReference>
<dbReference type="SUPFAM" id="SSF161029">
    <property type="entry name" value="Photosystem II reaction center protein T, PsbT"/>
    <property type="match status" value="1"/>
</dbReference>
<sequence>MESVAYILIFTLTIGTLFFAVAFREPPRIERKEK</sequence>
<accession>Q9S3W3</accession>
<protein>
    <recommendedName>
        <fullName evidence="1">Photosystem II reaction center protein T</fullName>
        <shortName evidence="1">PSII-T</shortName>
    </recommendedName>
</protein>
<organism>
    <name type="scientific">Mastigocladus laminosus</name>
    <name type="common">Fischerella sp.</name>
    <dbReference type="NCBI Taxonomy" id="83541"/>
    <lineage>
        <taxon>Bacteria</taxon>
        <taxon>Bacillati</taxon>
        <taxon>Cyanobacteriota</taxon>
        <taxon>Cyanophyceae</taxon>
        <taxon>Nostocales</taxon>
        <taxon>Hapalosiphonaceae</taxon>
        <taxon>Mastigocladus</taxon>
    </lineage>
</organism>
<reference key="1">
    <citation type="submission" date="1999-07" db="EMBL/GenBank/DDBJ databases">
        <title>Cloning of the psbB gene encoding photosystem II chlorophyll-binding protein CP-47 from the thermophilic cyanobacterium Mastigocladus laminosus.</title>
        <authorList>
            <person name="He Z.Y."/>
            <person name="Nechushtai R."/>
        </authorList>
    </citation>
    <scope>NUCLEOTIDE SEQUENCE [GENOMIC DNA]</scope>
</reference>
<keyword id="KW-0472">Membrane</keyword>
<keyword id="KW-0602">Photosynthesis</keyword>
<keyword id="KW-0604">Photosystem II</keyword>
<keyword id="KW-0793">Thylakoid</keyword>
<keyword id="KW-0812">Transmembrane</keyword>
<keyword id="KW-1133">Transmembrane helix</keyword>
<gene>
    <name evidence="1" type="primary">psbT</name>
</gene>
<feature type="chain" id="PRO_0000218000" description="Photosystem II reaction center protein T">
    <location>
        <begin position="1"/>
        <end position="34"/>
    </location>
</feature>
<feature type="transmembrane region" description="Helical" evidence="1">
    <location>
        <begin position="3"/>
        <end position="23"/>
    </location>
</feature>